<feature type="chain" id="PRO_0000097573" description="Sterile alpha motif domain-containing protein 9">
    <location>
        <begin position="1"/>
        <end position="1589"/>
    </location>
</feature>
<feature type="domain" description="SAM" evidence="1">
    <location>
        <begin position="14"/>
        <end position="78"/>
    </location>
</feature>
<feature type="region of interest" description="Disordered" evidence="2">
    <location>
        <begin position="83"/>
        <end position="135"/>
    </location>
</feature>
<feature type="compositionally biased region" description="Basic and acidic residues" evidence="2">
    <location>
        <begin position="103"/>
        <end position="120"/>
    </location>
</feature>
<feature type="sequence variant" id="VAR_031526" description="In dbSNP:rs6969691.">
    <original>I</original>
    <variation>T</variation>
    <location>
        <position position="143"/>
    </location>
</feature>
<feature type="sequence variant" id="VAR_031527" description="In dbSNP:rs10239435.">
    <original>N</original>
    <variation>S</variation>
    <location>
        <position position="449"/>
    </location>
</feature>
<feature type="sequence variant" id="VAR_077885" description="In MIRAGE; decreased cell proliferation; changed endosome organization." evidence="9">
    <original>R</original>
    <variation>Q</variation>
    <location>
        <position position="459"/>
    </location>
</feature>
<feature type="sequence variant" id="VAR_031528" description="In dbSNP:rs10279499.">
    <original>V</original>
    <variation>L</variation>
    <location>
        <position position="549"/>
    </location>
</feature>
<feature type="sequence variant" id="VAR_085147" description="In M7MLS2." evidence="11">
    <original>K</original>
    <variation>E</variation>
    <location>
        <position position="676"/>
    </location>
</feature>
<feature type="sequence variant" id="VAR_077886" description="In MIRAGE; decreased cell proliferation; changed endosome organization." evidence="9">
    <original>D</original>
    <variation>N</variation>
    <location>
        <position position="769"/>
    </location>
</feature>
<feature type="sequence variant" id="VAR_077887" description="In MIRAGE; decreased cell proliferation; changed endosome organization." evidence="9">
    <original>N</original>
    <variation>Y</variation>
    <location>
        <position position="834"/>
    </location>
</feature>
<feature type="sequence variant" id="VAR_077888" description="In MIRAGE; decreased cell proliferation; changed endosome organization; dbSNP:rs1554336981." evidence="9">
    <original>E</original>
    <variation>K</variation>
    <location>
        <position position="974"/>
    </location>
</feature>
<feature type="sequence variant" id="VAR_077889" description="In MIRAGE; decreased cell proliferation; changed endosome organization." evidence="9">
    <original>A</original>
    <variation>V</variation>
    <location>
        <position position="1195"/>
    </location>
</feature>
<feature type="sequence variant" id="VAR_077890" description="In MIRAGE; decreased cell proliferation; changed endosome organization." evidence="9">
    <original>P</original>
    <variation>L</variation>
    <location>
        <position position="1280"/>
    </location>
</feature>
<feature type="sequence variant" id="VAR_077891" description="In MIRAGE; decreased cell proliferation; changed endosome organization." evidence="9">
    <original>Q</original>
    <variation>K</variation>
    <location>
        <position position="1286"/>
    </location>
</feature>
<feature type="sequence variant" id="VAR_077813" description="In MIRAGE; decreased cell proliferation; changed endosome organization." evidence="9">
    <original>R</original>
    <variation>W</variation>
    <location>
        <position position="1293"/>
    </location>
</feature>
<feature type="sequence variant" id="VAR_031529" description="In NFTC; loss of cytoplasmic expression; dbSNP:rs121918554." evidence="3 5">
    <original>K</original>
    <variation>E</variation>
    <location>
        <position position="1495"/>
    </location>
</feature>
<feature type="mutagenesis site" description="No defect in double-stranded nucleic acid binding but defective at inhibiting viral replication." evidence="12">
    <original>K</original>
    <variation>E</variation>
    <location>
        <position position="198"/>
    </location>
</feature>
<feature type="mutagenesis site" description="No defect in double-stranded nucleic acid binding but defective at inhibiting viral replication." evidence="12">
    <original>K</original>
    <variation>E</variation>
    <location>
        <position position="214"/>
    </location>
</feature>
<feature type="mutagenesis site" description="No defect in double-stranded nucleic acid binding but defective at inhibiting viral replication." evidence="12">
    <original>K</original>
    <variation>E</variation>
    <location>
        <position position="257"/>
    </location>
</feature>
<feature type="sequence conflict" description="In Ref. 7; BAA90932." evidence="13" ref="7">
    <original>S</original>
    <variation>P</variation>
    <location>
        <position position="1577"/>
    </location>
</feature>
<feature type="strand" evidence="15">
    <location>
        <begin position="190"/>
        <end position="192"/>
    </location>
</feature>
<feature type="strand" evidence="15">
    <location>
        <begin position="194"/>
        <end position="197"/>
    </location>
</feature>
<feature type="helix" evidence="15">
    <location>
        <begin position="208"/>
        <end position="229"/>
    </location>
</feature>
<feature type="strand" evidence="15">
    <location>
        <begin position="233"/>
        <end position="240"/>
    </location>
</feature>
<feature type="helix" evidence="15">
    <location>
        <begin position="254"/>
        <end position="271"/>
    </location>
</feature>
<feature type="helix" evidence="15">
    <location>
        <begin position="274"/>
        <end position="283"/>
    </location>
</feature>
<feature type="strand" evidence="15">
    <location>
        <begin position="288"/>
        <end position="293"/>
    </location>
</feature>
<feature type="strand" evidence="15">
    <location>
        <begin position="301"/>
        <end position="309"/>
    </location>
</feature>
<feature type="turn" evidence="15">
    <location>
        <begin position="313"/>
        <end position="315"/>
    </location>
</feature>
<feature type="strand" evidence="15">
    <location>
        <begin position="316"/>
        <end position="318"/>
    </location>
</feature>
<feature type="strand" evidence="15">
    <location>
        <begin position="342"/>
        <end position="344"/>
    </location>
</feature>
<feature type="strand" evidence="15">
    <location>
        <begin position="346"/>
        <end position="351"/>
    </location>
</feature>
<feature type="helix" evidence="15">
    <location>
        <begin position="358"/>
        <end position="364"/>
    </location>
</feature>
<feature type="helix" evidence="15">
    <location>
        <begin position="366"/>
        <end position="379"/>
    </location>
</feature>
<dbReference type="EMBL" id="AF445355">
    <property type="protein sequence ID" value="AAQ04637.1"/>
    <property type="molecule type" value="mRNA"/>
</dbReference>
<dbReference type="EMBL" id="AF453311">
    <property type="protein sequence ID" value="AAQ04689.3"/>
    <property type="status" value="ALT_SEQ"/>
    <property type="molecule type" value="mRNA"/>
</dbReference>
<dbReference type="EMBL" id="AB095925">
    <property type="protein sequence ID" value="BAC23101.1"/>
    <property type="status" value="ALT_INIT"/>
    <property type="molecule type" value="mRNA"/>
</dbReference>
<dbReference type="EMBL" id="AC000119">
    <property type="protein sequence ID" value="AAQ96842.1"/>
    <property type="molecule type" value="Genomic_DNA"/>
</dbReference>
<dbReference type="EMBL" id="CH236949">
    <property type="protein sequence ID" value="EAL24145.1"/>
    <property type="molecule type" value="Genomic_DNA"/>
</dbReference>
<dbReference type="EMBL" id="CH471091">
    <property type="protein sequence ID" value="EAW76826.1"/>
    <property type="molecule type" value="Genomic_DNA"/>
</dbReference>
<dbReference type="EMBL" id="BC065769">
    <property type="protein sequence ID" value="AAH65769.1"/>
    <property type="status" value="ALT_SEQ"/>
    <property type="molecule type" value="mRNA"/>
</dbReference>
<dbReference type="EMBL" id="BC132773">
    <property type="protein sequence ID" value="AAI32774.1"/>
    <property type="molecule type" value="mRNA"/>
</dbReference>
<dbReference type="EMBL" id="BC132775">
    <property type="protein sequence ID" value="AAI32776.1"/>
    <property type="molecule type" value="mRNA"/>
</dbReference>
<dbReference type="EMBL" id="BC150249">
    <property type="protein sequence ID" value="AAI50250.1"/>
    <property type="molecule type" value="mRNA"/>
</dbReference>
<dbReference type="EMBL" id="AK000080">
    <property type="protein sequence ID" value="BAA90932.1"/>
    <property type="status" value="ALT_INIT"/>
    <property type="molecule type" value="mRNA"/>
</dbReference>
<dbReference type="CCDS" id="CCDS34680.1"/>
<dbReference type="RefSeq" id="NP_001180236.1">
    <property type="nucleotide sequence ID" value="NM_001193307.2"/>
</dbReference>
<dbReference type="RefSeq" id="NP_060124.2">
    <property type="nucleotide sequence ID" value="NM_017654.3"/>
</dbReference>
<dbReference type="PDB" id="7KSP">
    <property type="method" value="X-ray"/>
    <property type="resolution" value="2.80 A"/>
    <property type="chains" value="A/B=156-385"/>
</dbReference>
<dbReference type="PDBsum" id="7KSP"/>
<dbReference type="SMR" id="Q5K651"/>
<dbReference type="BioGRID" id="120166">
    <property type="interactions" value="34"/>
</dbReference>
<dbReference type="FunCoup" id="Q5K651">
    <property type="interactions" value="980"/>
</dbReference>
<dbReference type="IntAct" id="Q5K651">
    <property type="interactions" value="14"/>
</dbReference>
<dbReference type="MINT" id="Q5K651"/>
<dbReference type="STRING" id="9606.ENSP00000369292"/>
<dbReference type="GlyGen" id="Q5K651">
    <property type="glycosylation" value="2 sites, 1 O-linked glycan (1 site)"/>
</dbReference>
<dbReference type="iPTMnet" id="Q5K651"/>
<dbReference type="MetOSite" id="Q5K651"/>
<dbReference type="PhosphoSitePlus" id="Q5K651"/>
<dbReference type="BioMuta" id="SAMD9"/>
<dbReference type="DMDM" id="71153739"/>
<dbReference type="jPOST" id="Q5K651"/>
<dbReference type="MassIVE" id="Q5K651"/>
<dbReference type="PaxDb" id="9606-ENSP00000369292"/>
<dbReference type="PeptideAtlas" id="Q5K651"/>
<dbReference type="ProteomicsDB" id="63547"/>
<dbReference type="Pumba" id="Q5K651"/>
<dbReference type="Antibodypedia" id="15642">
    <property type="antibodies" value="121 antibodies from 21 providers"/>
</dbReference>
<dbReference type="DNASU" id="54809"/>
<dbReference type="Ensembl" id="ENST00000379958.3">
    <property type="protein sequence ID" value="ENSP00000369292.2"/>
    <property type="gene ID" value="ENSG00000205413.8"/>
</dbReference>
<dbReference type="Ensembl" id="ENST00000620985.4">
    <property type="protein sequence ID" value="ENSP00000484636.1"/>
    <property type="gene ID" value="ENSG00000205413.8"/>
</dbReference>
<dbReference type="GeneID" id="54809"/>
<dbReference type="KEGG" id="hsa:54809"/>
<dbReference type="MANE-Select" id="ENST00000379958.3">
    <property type="protein sequence ID" value="ENSP00000369292.2"/>
    <property type="RefSeq nucleotide sequence ID" value="NM_017654.4"/>
    <property type="RefSeq protein sequence ID" value="NP_060124.2"/>
</dbReference>
<dbReference type="UCSC" id="uc003umf.4">
    <property type="organism name" value="human"/>
</dbReference>
<dbReference type="AGR" id="HGNC:1348"/>
<dbReference type="CTD" id="54809"/>
<dbReference type="DisGeNET" id="54809"/>
<dbReference type="GeneCards" id="SAMD9"/>
<dbReference type="GeneReviews" id="SAMD9"/>
<dbReference type="HGNC" id="HGNC:1348">
    <property type="gene designation" value="SAMD9"/>
</dbReference>
<dbReference type="HPA" id="ENSG00000205413">
    <property type="expression patterns" value="Tissue enhanced (esophagus)"/>
</dbReference>
<dbReference type="MalaCards" id="SAMD9"/>
<dbReference type="MIM" id="610455">
    <property type="type" value="phenotype"/>
</dbReference>
<dbReference type="MIM" id="610456">
    <property type="type" value="gene"/>
</dbReference>
<dbReference type="MIM" id="617053">
    <property type="type" value="phenotype"/>
</dbReference>
<dbReference type="MIM" id="619041">
    <property type="type" value="phenotype"/>
</dbReference>
<dbReference type="neXtProt" id="NX_Q5K651"/>
<dbReference type="OpenTargets" id="ENSG00000205413"/>
<dbReference type="Orphanet" id="306658">
    <property type="disease" value="Familial normophosphatemic tumoral calcinosis"/>
</dbReference>
<dbReference type="Orphanet" id="494433">
    <property type="disease" value="MIRAGE syndrome"/>
</dbReference>
<dbReference type="PharmGKB" id="PA25948"/>
<dbReference type="VEuPathDB" id="HostDB:ENSG00000205413"/>
<dbReference type="eggNOG" id="ENOG502QPY6">
    <property type="taxonomic scope" value="Eukaryota"/>
</dbReference>
<dbReference type="GeneTree" id="ENSGT00390000013973"/>
<dbReference type="InParanoid" id="Q5K651"/>
<dbReference type="OMA" id="HEFKLFT"/>
<dbReference type="OrthoDB" id="2337140at2759"/>
<dbReference type="PAN-GO" id="Q5K651">
    <property type="GO annotations" value="1 GO annotation based on evolutionary models"/>
</dbReference>
<dbReference type="PhylomeDB" id="Q5K651"/>
<dbReference type="TreeFam" id="TF331842"/>
<dbReference type="PathwayCommons" id="Q5K651"/>
<dbReference type="SignaLink" id="Q5K651"/>
<dbReference type="BioGRID-ORCS" id="54809">
    <property type="hits" value="11 hits in 1151 CRISPR screens"/>
</dbReference>
<dbReference type="ChiTaRS" id="SAMD9">
    <property type="organism name" value="human"/>
</dbReference>
<dbReference type="GeneWiki" id="SAMD9"/>
<dbReference type="GenomeRNAi" id="54809"/>
<dbReference type="Pharos" id="Q5K651">
    <property type="development level" value="Tbio"/>
</dbReference>
<dbReference type="PRO" id="PR:Q5K651"/>
<dbReference type="Proteomes" id="UP000005640">
    <property type="component" value="Chromosome 7"/>
</dbReference>
<dbReference type="RNAct" id="Q5K651">
    <property type="molecule type" value="protein"/>
</dbReference>
<dbReference type="Bgee" id="ENSG00000205413">
    <property type="expression patterns" value="Expressed in esophagus squamous epithelium and 178 other cell types or tissues"/>
</dbReference>
<dbReference type="ExpressionAtlas" id="Q5K651">
    <property type="expression patterns" value="baseline and differential"/>
</dbReference>
<dbReference type="GO" id="GO:0005737">
    <property type="term" value="C:cytoplasm"/>
    <property type="evidence" value="ECO:0000314"/>
    <property type="project" value="UniProtKB"/>
</dbReference>
<dbReference type="GO" id="GO:0005829">
    <property type="term" value="C:cytosol"/>
    <property type="evidence" value="ECO:0000314"/>
    <property type="project" value="HPA"/>
</dbReference>
<dbReference type="GO" id="GO:0043231">
    <property type="term" value="C:intracellular membrane-bounded organelle"/>
    <property type="evidence" value="ECO:0000314"/>
    <property type="project" value="HPA"/>
</dbReference>
<dbReference type="GO" id="GO:0034058">
    <property type="term" value="P:endosomal vesicle fusion"/>
    <property type="evidence" value="ECO:0000314"/>
    <property type="project" value="UniProtKB"/>
</dbReference>
<dbReference type="GO" id="GO:0045087">
    <property type="term" value="P:innate immune response"/>
    <property type="evidence" value="ECO:0007669"/>
    <property type="project" value="UniProtKB-KW"/>
</dbReference>
<dbReference type="CDD" id="cd09528">
    <property type="entry name" value="SAM_Samd9_Samd9L"/>
    <property type="match status" value="1"/>
</dbReference>
<dbReference type="FunFam" id="1.10.150.50:FF:000087">
    <property type="entry name" value="Sterile alpha motif domain containing 9"/>
    <property type="match status" value="1"/>
</dbReference>
<dbReference type="Gene3D" id="1.10.150.50">
    <property type="entry name" value="Transcription Factor, Ets-1"/>
    <property type="match status" value="1"/>
</dbReference>
<dbReference type="InterPro" id="IPR027417">
    <property type="entry name" value="P-loop_NTPase"/>
</dbReference>
<dbReference type="InterPro" id="IPR001660">
    <property type="entry name" value="SAM"/>
</dbReference>
<dbReference type="InterPro" id="IPR013761">
    <property type="entry name" value="SAM/pointed_sf"/>
</dbReference>
<dbReference type="PANTHER" id="PTHR16155">
    <property type="entry name" value="DED DOMAIN-CONTAINING PROTEIN"/>
    <property type="match status" value="1"/>
</dbReference>
<dbReference type="PANTHER" id="PTHR16155:SF17">
    <property type="entry name" value="STERILE ALPHA MOTIF DOMAIN-CONTAINING PROTEIN 9"/>
    <property type="match status" value="1"/>
</dbReference>
<dbReference type="Pfam" id="PF00536">
    <property type="entry name" value="SAM_1"/>
    <property type="match status" value="1"/>
</dbReference>
<dbReference type="SMART" id="SM00454">
    <property type="entry name" value="SAM"/>
    <property type="match status" value="1"/>
</dbReference>
<dbReference type="SUPFAM" id="SSF52540">
    <property type="entry name" value="P-loop containing nucleoside triphosphate hydrolases"/>
    <property type="match status" value="1"/>
</dbReference>
<dbReference type="SUPFAM" id="SSF47769">
    <property type="entry name" value="SAM/Pointed domain"/>
    <property type="match status" value="1"/>
</dbReference>
<dbReference type="PROSITE" id="PS50105">
    <property type="entry name" value="SAM_DOMAIN"/>
    <property type="match status" value="1"/>
</dbReference>
<organism>
    <name type="scientific">Homo sapiens</name>
    <name type="common">Human</name>
    <dbReference type="NCBI Taxonomy" id="9606"/>
    <lineage>
        <taxon>Eukaryota</taxon>
        <taxon>Metazoa</taxon>
        <taxon>Chordata</taxon>
        <taxon>Craniata</taxon>
        <taxon>Vertebrata</taxon>
        <taxon>Euteleostomi</taxon>
        <taxon>Mammalia</taxon>
        <taxon>Eutheria</taxon>
        <taxon>Euarchontoglires</taxon>
        <taxon>Primates</taxon>
        <taxon>Haplorrhini</taxon>
        <taxon>Catarrhini</taxon>
        <taxon>Hominidae</taxon>
        <taxon>Homo</taxon>
    </lineage>
</organism>
<protein>
    <recommendedName>
        <fullName>Sterile alpha motif domain-containing protein 9</fullName>
        <shortName>SAM domain-containing protein 9</shortName>
    </recommendedName>
</protein>
<proteinExistence type="evidence at protein level"/>
<name>SAMD9_HUMAN</name>
<keyword id="KW-0002">3D-structure</keyword>
<keyword id="KW-0963">Cytoplasm</keyword>
<keyword id="KW-0225">Disease variant</keyword>
<keyword id="KW-0391">Immunity</keyword>
<keyword id="KW-0399">Innate immunity</keyword>
<keyword id="KW-1267">Proteomics identification</keyword>
<keyword id="KW-1185">Reference proteome</keyword>
<accession>Q5K651</accession>
<accession>A2RU68</accession>
<accession>Q5K649</accession>
<accession>Q6P080</accession>
<accession>Q75N21</accession>
<accession>Q8IVG6</accession>
<accession>Q9NXS8</accession>
<gene>
    <name type="primary">SAMD9</name>
    <name type="synonym">C7orf5</name>
    <name type="synonym">DRIF1</name>
    <name type="synonym">KIAA2004</name>
    <name type="synonym">OEF1</name>
</gene>
<sequence>MAKQLNLPENTDDWTKEDVNQWLESHKIDQKHREILTEQDVNGAVLKWLKKEHLVDMGITHGPAIQIEELFKELRKTAIEDSIQTSKMGKPSKNAPKDQTVSQKERRETSKQKQKGKENPDMANPSAMSTTAKGSKSLKVELIEDKIDYTKERQPSIDLTCVSYPFDEFSNPYRYKLDFSLQPETGPGNLIDPIHEFKAFTNTATATEEDVKMKFSNEVFRFASACMNSRTNGTIHFGVKDKPHGKIVGIKVTNDTKEALINHFNLMINKYFEDHQVQQAKKCIREPRFVEVLLPNSTLSDRFVIEVDIIPQFSECQYDYFQIKMQNYNNKIWEQSKKFSLFVRDGTSSKDITKNKVDFRAFKADFKTLAESRKAAEEKFRAKTNKKEREGPKLVKLLTGNQDLLDNSYYEQYILVTNKCHPDQTKHLDFLKEIKWFAVLEFDPESNINGVVKAYKESRVANLHFPSVYVEQKTTPNETISTLNLYHQPSWIFCNGRLDLDSEKYKPFDPSSWQRERASDVRKLISFLTHEDIMPRGKFLVVFLLLSSVDDPRDPLIETFCAFYQDLKGMENILCICVHPHIFQGWKDLLEARLIKHQDEISSQCISALSLEEINGTILKLKSVTQSSKRLLPSIGLSTVLLKKEEDIMTALEIICENECEGTLLEKDKNKFLEFKASKEEDFYRGGKVSWWNFYFSSESYSSPFVKRDKYERLEAMIQNCADSSKPTSTKIIHLYHHPGCGGTTLAMHILWELRKKFRCAVLKNKTVDFSEIGEQVTSLITYGAMNRQEYVPVLLLVDDFEEQDNVYLLQYSIQTAIAKKYIRYEKPLVIILNCMRSQNPEKSARIPDSIAVIQQLSPKEQRAFELKLKEIKEQHKNFEDFYSFMIMKTNFNKEYIENVVRNILKGQNIFTKEAKLFSFLALLNSYVPDTTISLSQCEKFLGIGNKKAFWGTEKFEDKMGTYSTILIKTEVIECGNYCGVRIIHSLIAEFSLEELKKSYHLNKSQIMLDMLTENLFFDTGMGKSKFLQDMHTLLLTRHRDEHEGETGNWFSPFIEALHKDEGNEAVEAVLLESIHRFNPNAFICQALARHFYIKKKDFGNALNWAKQAKIIEPDNSYISDTLGQVYKSKIRWWIEENGGNGNISVDDLIALLDLAEHASSAFKESQQQSEDREYEVKERLYPKSKRRYDTYNIAGYQGEIEVGLYTIQILQLIPFFDNKNELSKRYMVNFVSGSSDIPGDPNNEYKLALKNYIPYLTKLKFSLKKSFDFFDEYFVLLKPRNNIKQNEEAKTRRKVAGYFKKYVDIFCLLEESQNNTGLGSKFSEPLQVERCRRNLVALKADKFSGLLEYLIKSQEDAISTMKCIVNEYTFLLEQCTVKIQSKEKLNFILANIILSCIQPTSRLVKPVEKLKDQLREVLQPIGLTYQFSEPYFLASLLFWPENQQLDQHSEQMKEYAQALKNSFKGQYKHMHRTKQPIAYFFLGKGKRLERLVHKGKIDQCFKKTPDINSLWQSGDVWKEEKVQELLLRLQGRAENNCLYIEYGINEKITIPITPAFLGQLRSGRSIEKVSFYLGFSIGGPLAYDIEIV</sequence>
<evidence type="ECO:0000255" key="1">
    <source>
        <dbReference type="PROSITE-ProRule" id="PRU00184"/>
    </source>
</evidence>
<evidence type="ECO:0000256" key="2">
    <source>
        <dbReference type="SAM" id="MobiDB-lite"/>
    </source>
</evidence>
<evidence type="ECO:0000269" key="3">
    <source>
    </source>
</evidence>
<evidence type="ECO:0000269" key="4">
    <source>
    </source>
</evidence>
<evidence type="ECO:0000269" key="5">
    <source>
    </source>
</evidence>
<evidence type="ECO:0000269" key="6">
    <source>
    </source>
</evidence>
<evidence type="ECO:0000269" key="7">
    <source>
    </source>
</evidence>
<evidence type="ECO:0000269" key="8">
    <source>
    </source>
</evidence>
<evidence type="ECO:0000269" key="9">
    <source>
    </source>
</evidence>
<evidence type="ECO:0000269" key="10">
    <source>
    </source>
</evidence>
<evidence type="ECO:0000269" key="11">
    <source>
    </source>
</evidence>
<evidence type="ECO:0000269" key="12">
    <source>
    </source>
</evidence>
<evidence type="ECO:0000305" key="13"/>
<evidence type="ECO:0007744" key="14">
    <source>
        <dbReference type="PDB" id="7KSP"/>
    </source>
</evidence>
<evidence type="ECO:0007829" key="15">
    <source>
        <dbReference type="PDB" id="7KSP"/>
    </source>
</evidence>
<comment type="function">
    <text evidence="3 5 6 7 8 10">Double-stranded nucleic acid binding that acts as an antiviral factor by playing an essential role in the formation of cytoplasmic antiviral granules (PubMed:25428864, PubMed:28157624). May play a role in the inflammatory response to tissue injury and the control of extra-osseous calcification, acting as a downstream target of TNF-alpha signaling. Involved in the regulation of EGR1, in coordination with RGL2. May be involved in endosome fusion.</text>
</comment>
<comment type="subunit">
    <text evidence="6 7">Interacts with RGL2 (PubMed:21160498). Interacts with EEA1 (PubMed:24029230).</text>
</comment>
<comment type="subunit">
    <text evidence="10">(Microbial infection) Interacts with myxoma virus protein M062.</text>
</comment>
<comment type="interaction">
    <interactant intactId="EBI-2814750">
        <id>Q5K651</id>
    </interactant>
    <interactant intactId="EBI-298113">
        <id>Q15075</id>
        <label>EEA1</label>
    </interactant>
    <organismsDiffer>false</organismsDiffer>
    <experiments>2</experiments>
</comment>
<comment type="subcellular location">
    <subcellularLocation>
        <location evidence="3 4 8 10">Cytoplasm</location>
    </subcellularLocation>
</comment>
<comment type="tissue specificity">
    <text evidence="3 4">Widely expressed. Very low levels are detected in skeletal muscle. Not detected in brain. Down-regulated in aggressive fibromatosis, as well as in breast and colon cancers. Up-regulated in fibroblasts from patients with normophosphatemic tumoral calcinosis (NFTC).</text>
</comment>
<comment type="induction">
    <text evidence="5 6">Up-regulated by TNF-alpha through p38 MAPKs and NF-kappa-B. Up-regulated by osmotic shock. Induced by IFNG.</text>
</comment>
<comment type="disease" evidence="3 5">
    <disease id="DI-02078">
        <name>Tumoral calcinosis, normophosphatemic, familial</name>
        <acronym>NFTC</acronym>
        <description>An uncommon, life-threatening disorder characterized by progressive deposition of calcified masses in cutaneous and subcutaneous tissues. Serum phosphate levels are normal. Clinical features include painful calcified ulcerative lesions and massive calcium deposition in the mid- and lower dermis, severe skin and bone infections, erythematous papular skin eruption in infancy, conjunctivitis, and gingivitis. NFTC shows a striking resemblance to acquired dystrophic calcinosis, in which tissue calcification occurs as a consequence of tissue injury/inflammation.</description>
        <dbReference type="MIM" id="610455"/>
    </disease>
    <text>The disease is caused by variants affecting the gene represented in this entry.</text>
</comment>
<comment type="disease" evidence="9">
    <disease id="DI-04777">
        <name>MIRAGE syndrome</name>
        <acronym>MIRAGE</acronym>
        <description>A form of syndromic adrenal hypoplasia characterized by myelodysplasia, infection, restriction of growth, adrenal hypoplasia, genital phenotypes, and enteropathy.</description>
        <dbReference type="MIM" id="617053"/>
    </disease>
    <text>The disease is caused by variants affecting the gene represented in this entry.</text>
</comment>
<comment type="disease" evidence="11">
    <disease id="DI-05982">
        <name>Monosomy 7 myelodysplasia and leukemia syndrome 2</name>
        <acronym>M7MLS2</acronym>
        <description>A hematologic disorder manifesting in early childhood and characterized by bone marrow dyspoiesis, pancytopenia, myelodysplastic syndrome or acute myelogenous leukemia, associated with monosomy 7 in the bone marrow. Disease severity is highly variable. Inheritance is autosomal dominant with incomplete penetrance.</description>
        <dbReference type="MIM" id="619041"/>
    </disease>
    <text evidence="11">The disease is caused by variants affecting the gene represented in this entry. Germline mutations in SAMD9 with a suppressive effect on the cell cycle are associated with somatic loss of the chromosome 7 harboring the mutant allele. This results in the deletion of several genes and predisposes to the development of myelodysplastic syndrome and acute myelogenous leukemia.</text>
</comment>
<comment type="sequence caution" evidence="13">
    <conflict type="miscellaneous discrepancy">
        <sequence resource="EMBL-CDS" id="AAH65769"/>
    </conflict>
    <text>Contaminating sequence. Potential poly-A sequence.</text>
</comment>
<comment type="sequence caution" evidence="13">
    <conflict type="miscellaneous discrepancy">
        <sequence resource="EMBL-CDS" id="AAQ04689"/>
    </conflict>
    <text>Unlikely isoform. Aberrant splice sites.</text>
</comment>
<comment type="sequence caution" evidence="13">
    <conflict type="erroneous initiation">
        <sequence resource="EMBL-CDS" id="BAA90932"/>
    </conflict>
    <text>Truncated N-terminus.</text>
</comment>
<comment type="sequence caution" evidence="13">
    <conflict type="erroneous initiation">
        <sequence resource="EMBL-CDS" id="BAC23101"/>
    </conflict>
    <text>Extended N-terminus.</text>
</comment>
<reference key="1">
    <citation type="journal article" date="2007" name="BMC Genomics">
        <title>Human sterile alpha motif domain 9, a novel gene identified as down-regulated in aggressive fibromatosis, is absent in the mouse.</title>
        <authorList>
            <person name="Li C.F."/>
            <person name="MacDonald J.R."/>
            <person name="Wei R.Y."/>
            <person name="Ray J."/>
            <person name="Lau K."/>
            <person name="Kandel C."/>
            <person name="Koffman R."/>
            <person name="Bell S."/>
            <person name="Scherer S.W."/>
            <person name="Alman B.A."/>
        </authorList>
    </citation>
    <scope>NUCLEOTIDE SEQUENCE [MRNA]</scope>
    <scope>SUBCELLULAR LOCATION</scope>
    <scope>TISSUE SPECIFICITY</scope>
</reference>
<reference key="2">
    <citation type="submission" date="2002-11" db="EMBL/GenBank/DDBJ databases">
        <title>The nucleotide sequence of a long cDNA clone isolated from human.</title>
        <authorList>
            <person name="Nagase T."/>
            <person name="Kikuno R."/>
            <person name="Ohara O."/>
        </authorList>
    </citation>
    <scope>NUCLEOTIDE SEQUENCE [LARGE SCALE MRNA]</scope>
    <source>
        <tissue>Aortic endothelium</tissue>
    </source>
</reference>
<reference key="3">
    <citation type="journal article" date="2003" name="Nature">
        <title>The DNA sequence of human chromosome 7.</title>
        <authorList>
            <person name="Hillier L.W."/>
            <person name="Fulton R.S."/>
            <person name="Fulton L.A."/>
            <person name="Graves T.A."/>
            <person name="Pepin K.H."/>
            <person name="Wagner-McPherson C."/>
            <person name="Layman D."/>
            <person name="Maas J."/>
            <person name="Jaeger S."/>
            <person name="Walker R."/>
            <person name="Wylie K."/>
            <person name="Sekhon M."/>
            <person name="Becker M.C."/>
            <person name="O'Laughlin M.D."/>
            <person name="Schaller M.E."/>
            <person name="Fewell G.A."/>
            <person name="Delehaunty K.D."/>
            <person name="Miner T.L."/>
            <person name="Nash W.E."/>
            <person name="Cordes M."/>
            <person name="Du H."/>
            <person name="Sun H."/>
            <person name="Edwards J."/>
            <person name="Bradshaw-Cordum H."/>
            <person name="Ali J."/>
            <person name="Andrews S."/>
            <person name="Isak A."/>
            <person name="Vanbrunt A."/>
            <person name="Nguyen C."/>
            <person name="Du F."/>
            <person name="Lamar B."/>
            <person name="Courtney L."/>
            <person name="Kalicki J."/>
            <person name="Ozersky P."/>
            <person name="Bielicki L."/>
            <person name="Scott K."/>
            <person name="Holmes A."/>
            <person name="Harkins R."/>
            <person name="Harris A."/>
            <person name="Strong C.M."/>
            <person name="Hou S."/>
            <person name="Tomlinson C."/>
            <person name="Dauphin-Kohlberg S."/>
            <person name="Kozlowicz-Reilly A."/>
            <person name="Leonard S."/>
            <person name="Rohlfing T."/>
            <person name="Rock S.M."/>
            <person name="Tin-Wollam A.-M."/>
            <person name="Abbott A."/>
            <person name="Minx P."/>
            <person name="Maupin R."/>
            <person name="Strowmatt C."/>
            <person name="Latreille P."/>
            <person name="Miller N."/>
            <person name="Johnson D."/>
            <person name="Murray J."/>
            <person name="Woessner J.P."/>
            <person name="Wendl M.C."/>
            <person name="Yang S.-P."/>
            <person name="Schultz B.R."/>
            <person name="Wallis J.W."/>
            <person name="Spieth J."/>
            <person name="Bieri T.A."/>
            <person name="Nelson J.O."/>
            <person name="Berkowicz N."/>
            <person name="Wohldmann P.E."/>
            <person name="Cook L.L."/>
            <person name="Hickenbotham M.T."/>
            <person name="Eldred J."/>
            <person name="Williams D."/>
            <person name="Bedell J.A."/>
            <person name="Mardis E.R."/>
            <person name="Clifton S.W."/>
            <person name="Chissoe S.L."/>
            <person name="Marra M.A."/>
            <person name="Raymond C."/>
            <person name="Haugen E."/>
            <person name="Gillett W."/>
            <person name="Zhou Y."/>
            <person name="James R."/>
            <person name="Phelps K."/>
            <person name="Iadanoto S."/>
            <person name="Bubb K."/>
            <person name="Simms E."/>
            <person name="Levy R."/>
            <person name="Clendenning J."/>
            <person name="Kaul R."/>
            <person name="Kent W.J."/>
            <person name="Furey T.S."/>
            <person name="Baertsch R.A."/>
            <person name="Brent M.R."/>
            <person name="Keibler E."/>
            <person name="Flicek P."/>
            <person name="Bork P."/>
            <person name="Suyama M."/>
            <person name="Bailey J.A."/>
            <person name="Portnoy M.E."/>
            <person name="Torrents D."/>
            <person name="Chinwalla A.T."/>
            <person name="Gish W.R."/>
            <person name="Eddy S.R."/>
            <person name="McPherson J.D."/>
            <person name="Olson M.V."/>
            <person name="Eichler E.E."/>
            <person name="Green E.D."/>
            <person name="Waterston R.H."/>
            <person name="Wilson R.K."/>
        </authorList>
    </citation>
    <scope>NUCLEOTIDE SEQUENCE [LARGE SCALE GENOMIC DNA]</scope>
</reference>
<reference key="4">
    <citation type="journal article" date="2003" name="Science">
        <title>Human chromosome 7: DNA sequence and biology.</title>
        <authorList>
            <person name="Scherer S.W."/>
            <person name="Cheung J."/>
            <person name="MacDonald J.R."/>
            <person name="Osborne L.R."/>
            <person name="Nakabayashi K."/>
            <person name="Herbrick J.-A."/>
            <person name="Carson A.R."/>
            <person name="Parker-Katiraee L."/>
            <person name="Skaug J."/>
            <person name="Khaja R."/>
            <person name="Zhang J."/>
            <person name="Hudek A.K."/>
            <person name="Li M."/>
            <person name="Haddad M."/>
            <person name="Duggan G.E."/>
            <person name="Fernandez B.A."/>
            <person name="Kanematsu E."/>
            <person name="Gentles S."/>
            <person name="Christopoulos C.C."/>
            <person name="Choufani S."/>
            <person name="Kwasnicka D."/>
            <person name="Zheng X.H."/>
            <person name="Lai Z."/>
            <person name="Nusskern D.R."/>
            <person name="Zhang Q."/>
            <person name="Gu Z."/>
            <person name="Lu F."/>
            <person name="Zeesman S."/>
            <person name="Nowaczyk M.J."/>
            <person name="Teshima I."/>
            <person name="Chitayat D."/>
            <person name="Shuman C."/>
            <person name="Weksberg R."/>
            <person name="Zackai E.H."/>
            <person name="Grebe T.A."/>
            <person name="Cox S.R."/>
            <person name="Kirkpatrick S.J."/>
            <person name="Rahman N."/>
            <person name="Friedman J.M."/>
            <person name="Heng H.H.Q."/>
            <person name="Pelicci P.G."/>
            <person name="Lo-Coco F."/>
            <person name="Belloni E."/>
            <person name="Shaffer L.G."/>
            <person name="Pober B."/>
            <person name="Morton C.C."/>
            <person name="Gusella J.F."/>
            <person name="Bruns G.A.P."/>
            <person name="Korf B.R."/>
            <person name="Quade B.J."/>
            <person name="Ligon A.H."/>
            <person name="Ferguson H."/>
            <person name="Higgins A.W."/>
            <person name="Leach N.T."/>
            <person name="Herrick S.R."/>
            <person name="Lemyre E."/>
            <person name="Farra C.G."/>
            <person name="Kim H.-G."/>
            <person name="Summers A.M."/>
            <person name="Gripp K.W."/>
            <person name="Roberts W."/>
            <person name="Szatmari P."/>
            <person name="Winsor E.J.T."/>
            <person name="Grzeschik K.-H."/>
            <person name="Teebi A."/>
            <person name="Minassian B.A."/>
            <person name="Kere J."/>
            <person name="Armengol L."/>
            <person name="Pujana M.A."/>
            <person name="Estivill X."/>
            <person name="Wilson M.D."/>
            <person name="Koop B.F."/>
            <person name="Tosi S."/>
            <person name="Moore G.E."/>
            <person name="Boright A.P."/>
            <person name="Zlotorynski E."/>
            <person name="Kerem B."/>
            <person name="Kroisel P.M."/>
            <person name="Petek E."/>
            <person name="Oscier D.G."/>
            <person name="Mould S.J."/>
            <person name="Doehner H."/>
            <person name="Doehner K."/>
            <person name="Rommens J.M."/>
            <person name="Vincent J.B."/>
            <person name="Venter J.C."/>
            <person name="Li P.W."/>
            <person name="Mural R.J."/>
            <person name="Adams M.D."/>
            <person name="Tsui L.-C."/>
        </authorList>
    </citation>
    <scope>NUCLEOTIDE SEQUENCE [LARGE SCALE GENOMIC DNA]</scope>
</reference>
<reference key="5">
    <citation type="submission" date="2005-07" db="EMBL/GenBank/DDBJ databases">
        <authorList>
            <person name="Mural R.J."/>
            <person name="Istrail S."/>
            <person name="Sutton G.G."/>
            <person name="Florea L."/>
            <person name="Halpern A.L."/>
            <person name="Mobarry C.M."/>
            <person name="Lippert R."/>
            <person name="Walenz B."/>
            <person name="Shatkay H."/>
            <person name="Dew I."/>
            <person name="Miller J.R."/>
            <person name="Flanigan M.J."/>
            <person name="Edwards N.J."/>
            <person name="Bolanos R."/>
            <person name="Fasulo D."/>
            <person name="Halldorsson B.V."/>
            <person name="Hannenhalli S."/>
            <person name="Turner R."/>
            <person name="Yooseph S."/>
            <person name="Lu F."/>
            <person name="Nusskern D.R."/>
            <person name="Shue B.C."/>
            <person name="Zheng X.H."/>
            <person name="Zhong F."/>
            <person name="Delcher A.L."/>
            <person name="Huson D.H."/>
            <person name="Kravitz S.A."/>
            <person name="Mouchard L."/>
            <person name="Reinert K."/>
            <person name="Remington K.A."/>
            <person name="Clark A.G."/>
            <person name="Waterman M.S."/>
            <person name="Eichler E.E."/>
            <person name="Adams M.D."/>
            <person name="Hunkapiller M.W."/>
            <person name="Myers E.W."/>
            <person name="Venter J.C."/>
        </authorList>
    </citation>
    <scope>NUCLEOTIDE SEQUENCE [LARGE SCALE GENOMIC DNA]</scope>
</reference>
<reference key="6">
    <citation type="journal article" date="2004" name="Genome Res.">
        <title>The status, quality, and expansion of the NIH full-length cDNA project: the Mammalian Gene Collection (MGC).</title>
        <authorList>
            <consortium name="The MGC Project Team"/>
        </authorList>
    </citation>
    <scope>NUCLEOTIDE SEQUENCE [LARGE SCALE MRNA]</scope>
    <source>
        <tissue>Cerebellum</tissue>
        <tissue>Testis</tissue>
    </source>
</reference>
<reference key="7">
    <citation type="journal article" date="2004" name="Nat. Genet.">
        <title>Complete sequencing and characterization of 21,243 full-length human cDNAs.</title>
        <authorList>
            <person name="Ota T."/>
            <person name="Suzuki Y."/>
            <person name="Nishikawa T."/>
            <person name="Otsuki T."/>
            <person name="Sugiyama T."/>
            <person name="Irie R."/>
            <person name="Wakamatsu A."/>
            <person name="Hayashi K."/>
            <person name="Sato H."/>
            <person name="Nagai K."/>
            <person name="Kimura K."/>
            <person name="Makita H."/>
            <person name="Sekine M."/>
            <person name="Obayashi M."/>
            <person name="Nishi T."/>
            <person name="Shibahara T."/>
            <person name="Tanaka T."/>
            <person name="Ishii S."/>
            <person name="Yamamoto J."/>
            <person name="Saito K."/>
            <person name="Kawai Y."/>
            <person name="Isono Y."/>
            <person name="Nakamura Y."/>
            <person name="Nagahari K."/>
            <person name="Murakami K."/>
            <person name="Yasuda T."/>
            <person name="Iwayanagi T."/>
            <person name="Wagatsuma M."/>
            <person name="Shiratori A."/>
            <person name="Sudo H."/>
            <person name="Hosoiri T."/>
            <person name="Kaku Y."/>
            <person name="Kodaira H."/>
            <person name="Kondo H."/>
            <person name="Sugawara M."/>
            <person name="Takahashi M."/>
            <person name="Kanda K."/>
            <person name="Yokoi T."/>
            <person name="Furuya T."/>
            <person name="Kikkawa E."/>
            <person name="Omura Y."/>
            <person name="Abe K."/>
            <person name="Kamihara K."/>
            <person name="Katsuta N."/>
            <person name="Sato K."/>
            <person name="Tanikawa M."/>
            <person name="Yamazaki M."/>
            <person name="Ninomiya K."/>
            <person name="Ishibashi T."/>
            <person name="Yamashita H."/>
            <person name="Murakawa K."/>
            <person name="Fujimori K."/>
            <person name="Tanai H."/>
            <person name="Kimata M."/>
            <person name="Watanabe M."/>
            <person name="Hiraoka S."/>
            <person name="Chiba Y."/>
            <person name="Ishida S."/>
            <person name="Ono Y."/>
            <person name="Takiguchi S."/>
            <person name="Watanabe S."/>
            <person name="Yosida M."/>
            <person name="Hotuta T."/>
            <person name="Kusano J."/>
            <person name="Kanehori K."/>
            <person name="Takahashi-Fujii A."/>
            <person name="Hara H."/>
            <person name="Tanase T.-O."/>
            <person name="Nomura Y."/>
            <person name="Togiya S."/>
            <person name="Komai F."/>
            <person name="Hara R."/>
            <person name="Takeuchi K."/>
            <person name="Arita M."/>
            <person name="Imose N."/>
            <person name="Musashino K."/>
            <person name="Yuuki H."/>
            <person name="Oshima A."/>
            <person name="Sasaki N."/>
            <person name="Aotsuka S."/>
            <person name="Yoshikawa Y."/>
            <person name="Matsunawa H."/>
            <person name="Ichihara T."/>
            <person name="Shiohata N."/>
            <person name="Sano S."/>
            <person name="Moriya S."/>
            <person name="Momiyama H."/>
            <person name="Satoh N."/>
            <person name="Takami S."/>
            <person name="Terashima Y."/>
            <person name="Suzuki O."/>
            <person name="Nakagawa S."/>
            <person name="Senoh A."/>
            <person name="Mizoguchi H."/>
            <person name="Goto Y."/>
            <person name="Shimizu F."/>
            <person name="Wakebe H."/>
            <person name="Hishigaki H."/>
            <person name="Watanabe T."/>
            <person name="Sugiyama A."/>
            <person name="Takemoto M."/>
            <person name="Kawakami B."/>
            <person name="Yamazaki M."/>
            <person name="Watanabe K."/>
            <person name="Kumagai A."/>
            <person name="Itakura S."/>
            <person name="Fukuzumi Y."/>
            <person name="Fujimori Y."/>
            <person name="Komiyama M."/>
            <person name="Tashiro H."/>
            <person name="Tanigami A."/>
            <person name="Fujiwara T."/>
            <person name="Ono T."/>
            <person name="Yamada K."/>
            <person name="Fujii Y."/>
            <person name="Ozaki K."/>
            <person name="Hirao M."/>
            <person name="Ohmori Y."/>
            <person name="Kawabata A."/>
            <person name="Hikiji T."/>
            <person name="Kobatake N."/>
            <person name="Inagaki H."/>
            <person name="Ikema Y."/>
            <person name="Okamoto S."/>
            <person name="Okitani R."/>
            <person name="Kawakami T."/>
            <person name="Noguchi S."/>
            <person name="Itoh T."/>
            <person name="Shigeta K."/>
            <person name="Senba T."/>
            <person name="Matsumura K."/>
            <person name="Nakajima Y."/>
            <person name="Mizuno T."/>
            <person name="Morinaga M."/>
            <person name="Sasaki M."/>
            <person name="Togashi T."/>
            <person name="Oyama M."/>
            <person name="Hata H."/>
            <person name="Watanabe M."/>
            <person name="Komatsu T."/>
            <person name="Mizushima-Sugano J."/>
            <person name="Satoh T."/>
            <person name="Shirai Y."/>
            <person name="Takahashi Y."/>
            <person name="Nakagawa K."/>
            <person name="Okumura K."/>
            <person name="Nagase T."/>
            <person name="Nomura N."/>
            <person name="Kikuchi H."/>
            <person name="Masuho Y."/>
            <person name="Yamashita R."/>
            <person name="Nakai K."/>
            <person name="Yada T."/>
            <person name="Nakamura Y."/>
            <person name="Ohara O."/>
            <person name="Isogai T."/>
            <person name="Sugano S."/>
        </authorList>
    </citation>
    <scope>NUCLEOTIDE SEQUENCE [LARGE SCALE MRNA] OF 955-1589</scope>
    <source>
        <tissue>Colon</tissue>
    </source>
</reference>
<reference key="8">
    <citation type="journal article" date="2008" name="J. Invest. Dermatol.">
        <title>Normophosphatemic familial tumoral calcinosis is caused by deleterious mutations in SAMD9, encoding a TNF-alpha responsive protein.</title>
        <authorList>
            <person name="Chefetz I."/>
            <person name="Ben Amitai D."/>
            <person name="Browning S."/>
            <person name="Skorecki K."/>
            <person name="Adir N."/>
            <person name="Thomas M.G."/>
            <person name="Kogleck L."/>
            <person name="Topaz O."/>
            <person name="Indelman M."/>
            <person name="Uitto J."/>
            <person name="Richard G."/>
            <person name="Bradman N."/>
            <person name="Sprecher E."/>
        </authorList>
    </citation>
    <scope>FUNCTION</scope>
    <scope>INDUCTION</scope>
    <scope>VARIANT NFTC GLU-1495</scope>
</reference>
<reference key="9">
    <citation type="journal article" date="2006" name="Am. J. Hum. Genet.">
        <title>A deleterious mutation in SAMD9 causes normophosphatemic familial tumoral calcinosis.</title>
        <authorList>
            <person name="Topaz O."/>
            <person name="Indelman M."/>
            <person name="Chefetz I."/>
            <person name="Geiger D."/>
            <person name="Metzker A."/>
            <person name="Altschuler Y."/>
            <person name="Choder M."/>
            <person name="Bercovich D."/>
            <person name="Uitto J."/>
            <person name="Bergman R."/>
            <person name="Richard G."/>
            <person name="Sprecher E."/>
        </authorList>
    </citation>
    <scope>FUNCTION</scope>
    <scope>TISSUE SPECIFICITY</scope>
    <scope>SUBCELLULAR LOCATION</scope>
    <scope>VARIANT NFTC GLU-1495</scope>
    <scope>CHARACTERIZATION OF VARIANT NFTC GLU-1495</scope>
</reference>
<reference key="10">
    <citation type="journal article" date="2011" name="BMC Syst. Biol.">
        <title>Initial characterization of the human central proteome.</title>
        <authorList>
            <person name="Burkard T.R."/>
            <person name="Planyavsky M."/>
            <person name="Kaupe I."/>
            <person name="Breitwieser F.P."/>
            <person name="Buerckstuemmer T."/>
            <person name="Bennett K.L."/>
            <person name="Superti-Furga G."/>
            <person name="Colinge J."/>
        </authorList>
    </citation>
    <scope>IDENTIFICATION BY MASS SPECTROMETRY [LARGE SCALE ANALYSIS]</scope>
</reference>
<reference key="11">
    <citation type="journal article" date="2011" name="J. Invest. Dermatol.">
        <title>Functional characterization of SAMD9, a protein deficient in normophosphatemic familial tumoral calcinosis.</title>
        <authorList>
            <person name="Hershkovitz D."/>
            <person name="Gross Y."/>
            <person name="Nahum S."/>
            <person name="Yehezkel S."/>
            <person name="Sarig O."/>
            <person name="Uitto J."/>
            <person name="Sprecher E."/>
        </authorList>
    </citation>
    <scope>FUNCTION</scope>
    <scope>INDUCTION BY IFNG</scope>
    <scope>INTERACTION WITH RGL2</scope>
</reference>
<reference key="12">
    <citation type="journal article" date="2013" name="Cancer Cell">
        <title>Haploinsufficiency of SAMD9L, an endosome fusion facilitator, causes myeloid malignancies in mice mimicking human diseases with monosomy 7.</title>
        <authorList>
            <person name="Nagamachi A."/>
            <person name="Matsui H."/>
            <person name="Asou H."/>
            <person name="Ozaki Y."/>
            <person name="Aki D."/>
            <person name="Kanai A."/>
            <person name="Takubo K."/>
            <person name="Suda T."/>
            <person name="Nakamura T."/>
            <person name="Wolff L."/>
            <person name="Honda H."/>
            <person name="Inaba T."/>
        </authorList>
    </citation>
    <scope>FUNCTION IN ENDOSOME FUSION</scope>
    <scope>INTERACTION WITH EEA1</scope>
</reference>
<reference key="13">
    <citation type="journal article" date="2015" name="J. Virol.">
        <title>SAMD9 is an innate antiviral host factor with stress response properties that can be antagonized by poxviruses.</title>
        <authorList>
            <person name="Liu J."/>
            <person name="McFadden G."/>
        </authorList>
    </citation>
    <scope>FUNCTION</scope>
    <scope>SUBCELLULAR LOCATION</scope>
</reference>
<reference key="14">
    <citation type="journal article" date="2017" name="Virology">
        <title>An interaction domain in human SAMD9 is essential for myxoma virus host-range determinant M062 antagonism of host anti-viral function.</title>
        <authorList>
            <person name="Nounamo B."/>
            <person name="Li Y."/>
            <person name="O'Byrne P."/>
            <person name="Kearney A.M."/>
            <person name="Khan A."/>
            <person name="Liu J."/>
        </authorList>
    </citation>
    <scope>FUNCTION</scope>
    <scope>SUBCELLULAR LOCATION</scope>
    <scope>INTERACTION WITH MYXOMA VIRUS PROTEIN M062 (MICROBIAL INFECTION)</scope>
</reference>
<reference evidence="14" key="15">
    <citation type="journal article" date="2022" name="Proc. Natl. Acad. Sci. U.S.A.">
        <title>Structure and function of an effector domain in antiviral factors and tumor suppressors SAMD9 and SAMD9L.</title>
        <authorList>
            <person name="Peng S."/>
            <person name="Meng X."/>
            <person name="Zhang F."/>
            <person name="Pathak P.K."/>
            <person name="Chaturvedi J."/>
            <person name="Coronado J."/>
            <person name="Morales M."/>
            <person name="Mao Y."/>
            <person name="Qian S.B."/>
            <person name="Deng J."/>
            <person name="Xiang Y."/>
        </authorList>
    </citation>
    <scope>X-RAY CRYSTALLOGRAPHY (2.80 ANGSTROMS) OF 156-385</scope>
    <scope>MUTAGENESIS OF LYS-198; LYS-214 AND LYS-257</scope>
</reference>
<reference key="16">
    <citation type="journal article" date="2016" name="Nat. Genet.">
        <title>SAMD9 mutations cause a novel multisystem disorder, MIRAGE syndrome, and are associated with loss of chromosome 7.</title>
        <authorList>
            <person name="Narumi S."/>
            <person name="Amano N."/>
            <person name="Ishii T."/>
            <person name="Katsumata N."/>
            <person name="Muroya K."/>
            <person name="Adachi M."/>
            <person name="Toyoshima K."/>
            <person name="Tanaka Y."/>
            <person name="Fukuzawa R."/>
            <person name="Miyako K."/>
            <person name="Kinjo S."/>
            <person name="Ohga S."/>
            <person name="Ihara K."/>
            <person name="Inoue H."/>
            <person name="Kinjo T."/>
            <person name="Hara T."/>
            <person name="Kohno M."/>
            <person name="Yamada S."/>
            <person name="Urano H."/>
            <person name="Kitagawa Y."/>
            <person name="Tsugawa K."/>
            <person name="Higa A."/>
            <person name="Miyawaki M."/>
            <person name="Okutani T."/>
            <person name="Kizaki Z."/>
            <person name="Hamada H."/>
            <person name="Kihara M."/>
            <person name="Shiga K."/>
            <person name="Yamaguchi T."/>
            <person name="Kenmochi M."/>
            <person name="Kitajima H."/>
            <person name="Fukami M."/>
            <person name="Shimizu A."/>
            <person name="Kudoh J."/>
            <person name="Shibata S."/>
            <person name="Okano H."/>
            <person name="Miyake N."/>
            <person name="Matsumoto N."/>
            <person name="Hasegawa T."/>
        </authorList>
    </citation>
    <scope>INVOLVEMENT IN MIRAGE</scope>
    <scope>VARIANTS MIRAGE GLN-459; ASN-769; TYR-834; LYS-974; VAL-1195; LEU-1280; LYS-1286 AND TRP-1293</scope>
    <scope>CHARACTERIZATION OF VARIANTS MIRAGE GLN-459; ASN-769; TYR-834; LYS-974; VAL-1195; LEU-1280; LYS-1286 AND TRP-1293</scope>
</reference>
<reference key="17">
    <citation type="journal article" date="2018" name="JCI Insight">
        <title>Germline SAMD9 and SAMD9L mutations are associated with extensive genetic evolution and diverse hematologic outcomes.</title>
        <authorList>
            <person name="Wong J.C."/>
            <person name="Bryant V."/>
            <person name="Lamprecht T."/>
            <person name="Ma J."/>
            <person name="Walsh M."/>
            <person name="Schwartz J."/>
            <person name="Del Pilar Alzamora M."/>
            <person name="Mullighan C.G."/>
            <person name="Loh M.L."/>
            <person name="Ribeiro R."/>
            <person name="Downing J.R."/>
            <person name="Carroll W.L."/>
            <person name="Davis J."/>
            <person name="Gold S."/>
            <person name="Rogers P.C."/>
            <person name="Israels S."/>
            <person name="Yanofsky R."/>
            <person name="Shannon K."/>
            <person name="Klco J.M."/>
        </authorList>
    </citation>
    <scope>INVOLVEMENT IN M7MLS2</scope>
    <scope>VARIANT M7MLS2 GLU-676</scope>
</reference>